<sequence>MPKADIHPEWYPEAKVYCNGEVVMTVGSTQPEIHVDVWSGNHPYFTGTQKIIDTEGRVERFMRKYSKQEGSGSKSNKSKSTKSKKGKGKK</sequence>
<comment type="function">
    <text evidence="1">Binds the 23S rRNA.</text>
</comment>
<comment type="subunit">
    <text evidence="1">Part of the 50S ribosomal subunit.</text>
</comment>
<comment type="similarity">
    <text evidence="1">Belongs to the bacterial ribosomal protein bL31 family. Type A subfamily.</text>
</comment>
<feature type="chain" id="PRO_1000126762" description="Large ribosomal subunit protein bL31">
    <location>
        <begin position="1"/>
        <end position="90"/>
    </location>
</feature>
<feature type="region of interest" description="Disordered" evidence="2">
    <location>
        <begin position="65"/>
        <end position="90"/>
    </location>
</feature>
<feature type="compositionally biased region" description="Basic residues" evidence="2">
    <location>
        <begin position="76"/>
        <end position="90"/>
    </location>
</feature>
<name>RL31_TRIEI</name>
<gene>
    <name evidence="1" type="primary">rpmE</name>
    <name evidence="1" type="synonym">rpl31</name>
    <name type="ordered locus">Tery_2983</name>
</gene>
<evidence type="ECO:0000255" key="1">
    <source>
        <dbReference type="HAMAP-Rule" id="MF_00501"/>
    </source>
</evidence>
<evidence type="ECO:0000256" key="2">
    <source>
        <dbReference type="SAM" id="MobiDB-lite"/>
    </source>
</evidence>
<evidence type="ECO:0000305" key="3"/>
<keyword id="KW-0687">Ribonucleoprotein</keyword>
<keyword id="KW-0689">Ribosomal protein</keyword>
<keyword id="KW-0694">RNA-binding</keyword>
<keyword id="KW-0699">rRNA-binding</keyword>
<proteinExistence type="inferred from homology"/>
<dbReference type="EMBL" id="CP000393">
    <property type="protein sequence ID" value="ABG52138.1"/>
    <property type="molecule type" value="Genomic_DNA"/>
</dbReference>
<dbReference type="RefSeq" id="WP_011612494.1">
    <property type="nucleotide sequence ID" value="NC_008312.1"/>
</dbReference>
<dbReference type="STRING" id="203124.Tery_2983"/>
<dbReference type="KEGG" id="ter:Tery_2983"/>
<dbReference type="eggNOG" id="COG0254">
    <property type="taxonomic scope" value="Bacteria"/>
</dbReference>
<dbReference type="HOGENOM" id="CLU_114306_1_2_3"/>
<dbReference type="OrthoDB" id="9803251at2"/>
<dbReference type="GO" id="GO:1990904">
    <property type="term" value="C:ribonucleoprotein complex"/>
    <property type="evidence" value="ECO:0007669"/>
    <property type="project" value="UniProtKB-KW"/>
</dbReference>
<dbReference type="GO" id="GO:0005840">
    <property type="term" value="C:ribosome"/>
    <property type="evidence" value="ECO:0007669"/>
    <property type="project" value="UniProtKB-KW"/>
</dbReference>
<dbReference type="GO" id="GO:0019843">
    <property type="term" value="F:rRNA binding"/>
    <property type="evidence" value="ECO:0007669"/>
    <property type="project" value="UniProtKB-KW"/>
</dbReference>
<dbReference type="GO" id="GO:0003735">
    <property type="term" value="F:structural constituent of ribosome"/>
    <property type="evidence" value="ECO:0007669"/>
    <property type="project" value="InterPro"/>
</dbReference>
<dbReference type="GO" id="GO:0006412">
    <property type="term" value="P:translation"/>
    <property type="evidence" value="ECO:0007669"/>
    <property type="project" value="UniProtKB-UniRule"/>
</dbReference>
<dbReference type="Gene3D" id="4.10.830.30">
    <property type="entry name" value="Ribosomal protein L31"/>
    <property type="match status" value="1"/>
</dbReference>
<dbReference type="HAMAP" id="MF_00501">
    <property type="entry name" value="Ribosomal_bL31_1"/>
    <property type="match status" value="1"/>
</dbReference>
<dbReference type="InterPro" id="IPR034704">
    <property type="entry name" value="Ribosomal_bL28/bL31-like_sf"/>
</dbReference>
<dbReference type="InterPro" id="IPR002150">
    <property type="entry name" value="Ribosomal_bL31"/>
</dbReference>
<dbReference type="InterPro" id="IPR027491">
    <property type="entry name" value="Ribosomal_bL31_A"/>
</dbReference>
<dbReference type="InterPro" id="IPR042105">
    <property type="entry name" value="Ribosomal_bL31_sf"/>
</dbReference>
<dbReference type="NCBIfam" id="TIGR00105">
    <property type="entry name" value="L31"/>
    <property type="match status" value="1"/>
</dbReference>
<dbReference type="NCBIfam" id="NF001809">
    <property type="entry name" value="PRK00528.1"/>
    <property type="match status" value="1"/>
</dbReference>
<dbReference type="PANTHER" id="PTHR33280">
    <property type="entry name" value="50S RIBOSOMAL PROTEIN L31, CHLOROPLASTIC"/>
    <property type="match status" value="1"/>
</dbReference>
<dbReference type="PANTHER" id="PTHR33280:SF1">
    <property type="entry name" value="LARGE RIBOSOMAL SUBUNIT PROTEIN BL31C"/>
    <property type="match status" value="1"/>
</dbReference>
<dbReference type="Pfam" id="PF01197">
    <property type="entry name" value="Ribosomal_L31"/>
    <property type="match status" value="1"/>
</dbReference>
<dbReference type="PRINTS" id="PR01249">
    <property type="entry name" value="RIBOSOMALL31"/>
</dbReference>
<dbReference type="SUPFAM" id="SSF143800">
    <property type="entry name" value="L28p-like"/>
    <property type="match status" value="1"/>
</dbReference>
<dbReference type="PROSITE" id="PS01143">
    <property type="entry name" value="RIBOSOMAL_L31"/>
    <property type="match status" value="1"/>
</dbReference>
<organism>
    <name type="scientific">Trichodesmium erythraeum (strain IMS101)</name>
    <dbReference type="NCBI Taxonomy" id="203124"/>
    <lineage>
        <taxon>Bacteria</taxon>
        <taxon>Bacillati</taxon>
        <taxon>Cyanobacteriota</taxon>
        <taxon>Cyanophyceae</taxon>
        <taxon>Oscillatoriophycideae</taxon>
        <taxon>Oscillatoriales</taxon>
        <taxon>Microcoleaceae</taxon>
        <taxon>Trichodesmium</taxon>
    </lineage>
</organism>
<accession>Q110D6</accession>
<reference key="1">
    <citation type="journal article" date="2015" name="Proc. Natl. Acad. Sci. U.S.A.">
        <title>Trichodesmium genome maintains abundant, widespread noncoding DNA in situ, despite oligotrophic lifestyle.</title>
        <authorList>
            <person name="Walworth N."/>
            <person name="Pfreundt U."/>
            <person name="Nelson W.C."/>
            <person name="Mincer T."/>
            <person name="Heidelberg J.F."/>
            <person name="Fu F."/>
            <person name="Waterbury J.B."/>
            <person name="Glavina del Rio T."/>
            <person name="Goodwin L."/>
            <person name="Kyrpides N.C."/>
            <person name="Land M.L."/>
            <person name="Woyke T."/>
            <person name="Hutchins D.A."/>
            <person name="Hess W.R."/>
            <person name="Webb E.A."/>
        </authorList>
    </citation>
    <scope>NUCLEOTIDE SEQUENCE [LARGE SCALE GENOMIC DNA]</scope>
    <source>
        <strain>IMS101</strain>
    </source>
</reference>
<protein>
    <recommendedName>
        <fullName evidence="1">Large ribosomal subunit protein bL31</fullName>
    </recommendedName>
    <alternativeName>
        <fullName evidence="3">50S ribosomal protein L31</fullName>
    </alternativeName>
</protein>